<name>ALDR_ENCCU</name>
<gene>
    <name type="ordered locus">ECU01_0970</name>
</gene>
<protein>
    <recommendedName>
        <fullName>Aldose reductase</fullName>
        <shortName>AR</shortName>
        <ecNumber>1.1.1.21</ecNumber>
    </recommendedName>
    <alternativeName>
        <fullName>Aldehyde reductase</fullName>
    </alternativeName>
</protein>
<sequence length="301" mass="33357">MICKTQKLNNGKEIPTVGLGTWGMEDEAVLEGAIRNALSLGYRHIDTAFIYGNEKMIGNILKKLFDEGVVQRKDLFITSKLWNTFHGCPEDGLRRSLNDLQMDYVDLYLIHWPVTFDPAPDGTVESCGKKYNVGKFDAVGVWKKMEALVDLGLAKSIGISNFGKANTEKILGTCRICPAAIQIELHPYLNQKELVEFMKSKGIQVISYSSLGSAPGSSAKVRDDKTIKAIAKKYGCAPSQIILSYITAQGICVIPKSRSKEHLRENIDLKELSREDISAIDALNTGHRYVDPPGFGPEKFK</sequence>
<keyword id="KW-0963">Cytoplasm</keyword>
<keyword id="KW-0521">NADP</keyword>
<keyword id="KW-0560">Oxidoreductase</keyword>
<keyword id="KW-1185">Reference proteome</keyword>
<proteinExistence type="evidence at protein level"/>
<reference key="1">
    <citation type="journal article" date="2001" name="Genome Res.">
        <title>Sequence and analysis of chromosome I of the amitochondriate intracellular parasite Encephalitozoon cuniculi (Microspora).</title>
        <authorList>
            <person name="Peyret P."/>
            <person name="Katinka M.D."/>
            <person name="Duprat S."/>
            <person name="Duffieux F."/>
            <person name="Barbe V."/>
            <person name="Barbazanges M."/>
            <person name="Weissenbach J."/>
            <person name="Saurin W."/>
            <person name="Vivares C.P."/>
        </authorList>
    </citation>
    <scope>NUCLEOTIDE SEQUENCE [LARGE SCALE GENOMIC DNA]</scope>
    <source>
        <strain>GB-M1</strain>
    </source>
</reference>
<reference key="2">
    <citation type="journal article" date="2001" name="Nature">
        <title>Genome sequence and gene compaction of the eukaryote parasite Encephalitozoon cuniculi.</title>
        <authorList>
            <person name="Katinka M.D."/>
            <person name="Duprat S."/>
            <person name="Cornillot E."/>
            <person name="Metenier G."/>
            <person name="Thomarat F."/>
            <person name="Prensier G."/>
            <person name="Barbe V."/>
            <person name="Peyretaillade E."/>
            <person name="Brottier P."/>
            <person name="Wincker P."/>
            <person name="Delbac F."/>
            <person name="El Alaoui H."/>
            <person name="Peyret P."/>
            <person name="Saurin W."/>
            <person name="Gouy M."/>
            <person name="Weissenbach J."/>
            <person name="Vivares C.P."/>
        </authorList>
    </citation>
    <scope>NUCLEOTIDE SEQUENCE [LARGE SCALE GENOMIC DNA]</scope>
    <source>
        <strain>GB-M1</strain>
    </source>
</reference>
<reference key="3">
    <citation type="journal article" date="2006" name="Proteomics">
        <title>Proteomic analysis of the eukaryotic parasite Encephalitozoon cuniculi (microsporidia): a reference map for proteins expressed in late sporogonial stages.</title>
        <authorList>
            <person name="Brosson D."/>
            <person name="Kuhn L."/>
            <person name="Delbac F."/>
            <person name="Garin J."/>
            <person name="Vivares C.P."/>
            <person name="Texier C."/>
        </authorList>
    </citation>
    <scope>IDENTIFICATION BY MASS SPECTROMETRY [LARGE SCALE ANALYSIS]</scope>
    <scope>DEVELOPMENTAL STAGE</scope>
</reference>
<accession>Q8SSK6</accession>
<organism>
    <name type="scientific">Encephalitozoon cuniculi (strain GB-M1)</name>
    <name type="common">Microsporidian parasite</name>
    <dbReference type="NCBI Taxonomy" id="284813"/>
    <lineage>
        <taxon>Eukaryota</taxon>
        <taxon>Fungi</taxon>
        <taxon>Fungi incertae sedis</taxon>
        <taxon>Microsporidia</taxon>
        <taxon>Unikaryonidae</taxon>
        <taxon>Encephalitozoon</taxon>
    </lineage>
</organism>
<evidence type="ECO:0000250" key="1"/>
<evidence type="ECO:0000255" key="2"/>
<evidence type="ECO:0000269" key="3">
    <source>
    </source>
</evidence>
<evidence type="ECO:0000305" key="4"/>
<feature type="chain" id="PRO_0000381746" description="Aldose reductase">
    <location>
        <begin position="1"/>
        <end position="301"/>
    </location>
</feature>
<feature type="active site" description="Proton donor" evidence="1">
    <location>
        <position position="51"/>
    </location>
</feature>
<feature type="binding site" evidence="2">
    <location>
        <begin position="11"/>
        <end position="20"/>
    </location>
    <ligand>
        <name>NADP(+)</name>
        <dbReference type="ChEBI" id="CHEBI:58349"/>
    </ligand>
</feature>
<feature type="binding site" evidence="1">
    <location>
        <position position="111"/>
    </location>
    <ligand>
        <name>substrate</name>
    </ligand>
</feature>
<feature type="binding site" evidence="1">
    <location>
        <begin position="209"/>
        <end position="266"/>
    </location>
    <ligand>
        <name>NADP(+)</name>
        <dbReference type="ChEBI" id="CHEBI:58349"/>
    </ligand>
</feature>
<comment type="function">
    <text evidence="1">Catalyzes the NADPH-dependent reduction of a wide variety of carbonyl-containing compounds to their corresponding alcohols with a broad range of catalytic efficiencies.</text>
</comment>
<comment type="catalytic activity">
    <reaction>
        <text>an alditol + NAD(+) = an aldose + NADH + H(+)</text>
        <dbReference type="Rhea" id="RHEA:12785"/>
        <dbReference type="Rhea" id="RHEA-COMP:9554"/>
        <dbReference type="Rhea" id="RHEA-COMP:9555"/>
        <dbReference type="ChEBI" id="CHEBI:15378"/>
        <dbReference type="ChEBI" id="CHEBI:15693"/>
        <dbReference type="ChEBI" id="CHEBI:17522"/>
        <dbReference type="ChEBI" id="CHEBI:57540"/>
        <dbReference type="ChEBI" id="CHEBI:57945"/>
        <dbReference type="EC" id="1.1.1.21"/>
    </reaction>
</comment>
<comment type="catalytic activity">
    <reaction>
        <text>an alditol + NADP(+) = an aldose + NADPH + H(+)</text>
        <dbReference type="Rhea" id="RHEA:12789"/>
        <dbReference type="Rhea" id="RHEA-COMP:9554"/>
        <dbReference type="Rhea" id="RHEA-COMP:9555"/>
        <dbReference type="ChEBI" id="CHEBI:15378"/>
        <dbReference type="ChEBI" id="CHEBI:15693"/>
        <dbReference type="ChEBI" id="CHEBI:17522"/>
        <dbReference type="ChEBI" id="CHEBI:57783"/>
        <dbReference type="ChEBI" id="CHEBI:58349"/>
        <dbReference type="EC" id="1.1.1.21"/>
    </reaction>
</comment>
<comment type="subcellular location">
    <subcellularLocation>
        <location>Cytoplasm</location>
    </subcellularLocation>
</comment>
<comment type="developmental stage">
    <text evidence="3">Expressed in late sporogonial stages.</text>
</comment>
<comment type="similarity">
    <text evidence="4">Belongs to the aldo/keto reductase family.</text>
</comment>
<dbReference type="EC" id="1.1.1.21"/>
<dbReference type="EMBL" id="AL391737">
    <property type="protein sequence ID" value="CAD24968.1"/>
    <property type="molecule type" value="Genomic_DNA"/>
</dbReference>
<dbReference type="RefSeq" id="NP_001402183.1">
    <property type="nucleotide sequence ID" value="NM_001415665.1"/>
</dbReference>
<dbReference type="RefSeq" id="XP_965933.1">
    <property type="nucleotide sequence ID" value="XM_960840.1"/>
</dbReference>
<dbReference type="SMR" id="Q8SSK6"/>
<dbReference type="FunCoup" id="Q8SSK6">
    <property type="interactions" value="84"/>
</dbReference>
<dbReference type="STRING" id="284813.Q8SSK6"/>
<dbReference type="GeneID" id="860274"/>
<dbReference type="VEuPathDB" id="MicrosporidiaDB:ECU01_0970"/>
<dbReference type="HOGENOM" id="CLU_023205_0_0_1"/>
<dbReference type="InParanoid" id="Q8SSK6"/>
<dbReference type="OMA" id="PQRIHEN"/>
<dbReference type="OrthoDB" id="416253at2759"/>
<dbReference type="Proteomes" id="UP000000819">
    <property type="component" value="Chromosome I"/>
</dbReference>
<dbReference type="GO" id="GO:0005737">
    <property type="term" value="C:cytoplasm"/>
    <property type="evidence" value="ECO:0007669"/>
    <property type="project" value="UniProtKB-SubCell"/>
</dbReference>
<dbReference type="GO" id="GO:0004032">
    <property type="term" value="F:aldose reductase (NADPH) activity"/>
    <property type="evidence" value="ECO:0007669"/>
    <property type="project" value="RHEA"/>
</dbReference>
<dbReference type="CDD" id="cd19071">
    <property type="entry name" value="AKR_AKR1-5-like"/>
    <property type="match status" value="1"/>
</dbReference>
<dbReference type="FunFam" id="3.20.20.100:FF:000002">
    <property type="entry name" value="2,5-diketo-D-gluconic acid reductase A"/>
    <property type="match status" value="1"/>
</dbReference>
<dbReference type="Gene3D" id="3.20.20.100">
    <property type="entry name" value="NADP-dependent oxidoreductase domain"/>
    <property type="match status" value="1"/>
</dbReference>
<dbReference type="InterPro" id="IPR020471">
    <property type="entry name" value="AKR"/>
</dbReference>
<dbReference type="InterPro" id="IPR018170">
    <property type="entry name" value="Aldo/ket_reductase_CS"/>
</dbReference>
<dbReference type="InterPro" id="IPR023210">
    <property type="entry name" value="NADP_OxRdtase_dom"/>
</dbReference>
<dbReference type="InterPro" id="IPR036812">
    <property type="entry name" value="NADP_OxRdtase_dom_sf"/>
</dbReference>
<dbReference type="PANTHER" id="PTHR11732">
    <property type="entry name" value="ALDO/KETO REDUCTASE"/>
    <property type="match status" value="1"/>
</dbReference>
<dbReference type="Pfam" id="PF00248">
    <property type="entry name" value="Aldo_ket_red"/>
    <property type="match status" value="1"/>
</dbReference>
<dbReference type="PIRSF" id="PIRSF000097">
    <property type="entry name" value="AKR"/>
    <property type="match status" value="1"/>
</dbReference>
<dbReference type="PRINTS" id="PR00069">
    <property type="entry name" value="ALDKETRDTASE"/>
</dbReference>
<dbReference type="SUPFAM" id="SSF51430">
    <property type="entry name" value="NAD(P)-linked oxidoreductase"/>
    <property type="match status" value="1"/>
</dbReference>
<dbReference type="PROSITE" id="PS00798">
    <property type="entry name" value="ALDOKETO_REDUCTASE_1"/>
    <property type="match status" value="1"/>
</dbReference>
<dbReference type="PROSITE" id="PS00062">
    <property type="entry name" value="ALDOKETO_REDUCTASE_2"/>
    <property type="match status" value="1"/>
</dbReference>